<comment type="function">
    <text evidence="13">Catalyzes the rate-limiting reaction in the mitochondrial fatty acid synthesis (FAS) type II pathway. Responsible for the production of the mitochondrial malonyl-CoA, used for the biosynthesis of the cofactor lipoic acid. This protein carries three functions: biotin carboxyl carrier protein, biotin carboxylase, and carboxyltransferase.</text>
</comment>
<comment type="catalytic activity">
    <reaction evidence="13">
        <text>hydrogencarbonate + acetyl-CoA + ATP = malonyl-CoA + ADP + phosphate + H(+)</text>
        <dbReference type="Rhea" id="RHEA:11308"/>
        <dbReference type="ChEBI" id="CHEBI:15378"/>
        <dbReference type="ChEBI" id="CHEBI:17544"/>
        <dbReference type="ChEBI" id="CHEBI:30616"/>
        <dbReference type="ChEBI" id="CHEBI:43474"/>
        <dbReference type="ChEBI" id="CHEBI:57288"/>
        <dbReference type="ChEBI" id="CHEBI:57384"/>
        <dbReference type="ChEBI" id="CHEBI:456216"/>
        <dbReference type="EC" id="6.4.1.2"/>
    </reaction>
</comment>
<comment type="catalytic activity">
    <reaction evidence="2">
        <text>N(6)-biotinyl-L-lysyl-[protein] + hydrogencarbonate + ATP = N(6)-carboxybiotinyl-L-lysyl-[protein] + ADP + phosphate + H(+)</text>
        <dbReference type="Rhea" id="RHEA:13501"/>
        <dbReference type="Rhea" id="RHEA-COMP:10505"/>
        <dbReference type="Rhea" id="RHEA-COMP:10506"/>
        <dbReference type="ChEBI" id="CHEBI:15378"/>
        <dbReference type="ChEBI" id="CHEBI:17544"/>
        <dbReference type="ChEBI" id="CHEBI:30616"/>
        <dbReference type="ChEBI" id="CHEBI:43474"/>
        <dbReference type="ChEBI" id="CHEBI:83144"/>
        <dbReference type="ChEBI" id="CHEBI:83145"/>
        <dbReference type="ChEBI" id="CHEBI:456216"/>
        <dbReference type="EC" id="6.3.4.14"/>
    </reaction>
</comment>
<comment type="cofactor">
    <cofactor evidence="1">
        <name>biotin</name>
        <dbReference type="ChEBI" id="CHEBI:57586"/>
    </cofactor>
</comment>
<comment type="pathway">
    <text>Lipid metabolism; malonyl-CoA biosynthesis; malonyl-CoA from acetyl-CoA: step 1/1.</text>
</comment>
<comment type="subcellular location">
    <subcellularLocation>
        <location evidence="10 12 13">Mitochondrion</location>
    </subcellularLocation>
</comment>
<comment type="miscellaneous">
    <text evidence="11">Present with 396 molecules/cell in log phase SD medium.</text>
</comment>
<comment type="caution">
    <text evidence="16">The reading frame from which this protein is translated has no Met initiation codon near to the 5'-end. However, it is not a pseudogene. It has been shown (PubMed:14761959) that at least 72 residues upstream of the first in-frame start codon (Met-151) are required for function and proper subcellular location. May be translated by means of alternative initiation codon usage, programmed translational frame shifting, or mRNA editing.</text>
</comment>
<comment type="sequence caution" evidence="15">
    <conflict type="erroneous initiation">
        <sequence resource="EMBL-CDS" id="DAA10106"/>
    </conflict>
    <text>Truncated N-terminus.</text>
</comment>
<evidence type="ECO:0000250" key="1">
    <source>
        <dbReference type="UniProtKB" id="O00763"/>
    </source>
</evidence>
<evidence type="ECO:0000250" key="2">
    <source>
        <dbReference type="UniProtKB" id="O04983"/>
    </source>
</evidence>
<evidence type="ECO:0000250" key="3">
    <source>
        <dbReference type="UniProtKB" id="Q00955"/>
    </source>
</evidence>
<evidence type="ECO:0000255" key="4"/>
<evidence type="ECO:0000255" key="5">
    <source>
        <dbReference type="PROSITE-ProRule" id="PRU00409"/>
    </source>
</evidence>
<evidence type="ECO:0000255" key="6">
    <source>
        <dbReference type="PROSITE-ProRule" id="PRU01066"/>
    </source>
</evidence>
<evidence type="ECO:0000255" key="7">
    <source>
        <dbReference type="PROSITE-ProRule" id="PRU01136"/>
    </source>
</evidence>
<evidence type="ECO:0000255" key="8">
    <source>
        <dbReference type="PROSITE-ProRule" id="PRU01137"/>
    </source>
</evidence>
<evidence type="ECO:0000255" key="9">
    <source>
        <dbReference type="PROSITE-ProRule" id="PRU01138"/>
    </source>
</evidence>
<evidence type="ECO:0000269" key="10">
    <source>
    </source>
</evidence>
<evidence type="ECO:0000269" key="11">
    <source>
    </source>
</evidence>
<evidence type="ECO:0000269" key="12">
    <source>
    </source>
</evidence>
<evidence type="ECO:0000269" key="13">
    <source>
    </source>
</evidence>
<evidence type="ECO:0000303" key="14">
    <source>
    </source>
</evidence>
<evidence type="ECO:0000305" key="15"/>
<evidence type="ECO:0000305" key="16">
    <source>
    </source>
</evidence>
<organism>
    <name type="scientific">Saccharomyces cerevisiae (strain ATCC 204508 / S288c)</name>
    <name type="common">Baker's yeast</name>
    <dbReference type="NCBI Taxonomy" id="559292"/>
    <lineage>
        <taxon>Eukaryota</taxon>
        <taxon>Fungi</taxon>
        <taxon>Dikarya</taxon>
        <taxon>Ascomycota</taxon>
        <taxon>Saccharomycotina</taxon>
        <taxon>Saccharomycetes</taxon>
        <taxon>Saccharomycetales</taxon>
        <taxon>Saccharomycetaceae</taxon>
        <taxon>Saccharomyces</taxon>
    </lineage>
</organism>
<reference key="1">
    <citation type="submission" date="1995-10" db="EMBL/GenBank/DDBJ databases">
        <title>Occurrence of an acetyl-CoA carboxylase-like gene in Saccharomyces serevisiae.</title>
        <authorList>
            <person name="Saito A."/>
            <person name="Kazuta Y."/>
            <person name="Kondo H."/>
            <person name="Tanabe T."/>
        </authorList>
    </citation>
    <scope>NUCLEOTIDE SEQUENCE [GENOMIC DNA]</scope>
    <source>
        <strain>SP1</strain>
    </source>
</reference>
<reference key="2">
    <citation type="journal article" date="1997" name="Nature">
        <title>The nucleotide sequence of Saccharomyces cerevisiae chromosome XIII.</title>
        <authorList>
            <person name="Bowman S."/>
            <person name="Churcher C.M."/>
            <person name="Badcock K."/>
            <person name="Brown D."/>
            <person name="Chillingworth T."/>
            <person name="Connor R."/>
            <person name="Dedman K."/>
            <person name="Devlin K."/>
            <person name="Gentles S."/>
            <person name="Hamlin N."/>
            <person name="Hunt S."/>
            <person name="Jagels K."/>
            <person name="Lye G."/>
            <person name="Moule S."/>
            <person name="Odell C."/>
            <person name="Pearson D."/>
            <person name="Rajandream M.A."/>
            <person name="Rice P."/>
            <person name="Skelton J."/>
            <person name="Walsh S.V."/>
            <person name="Whitehead S."/>
            <person name="Barrell B.G."/>
        </authorList>
    </citation>
    <scope>NUCLEOTIDE SEQUENCE [LARGE SCALE GENOMIC DNA]</scope>
    <source>
        <strain>ATCC 204508 / S288c</strain>
    </source>
</reference>
<reference key="3">
    <citation type="journal article" date="2014" name="G3 (Bethesda)">
        <title>The reference genome sequence of Saccharomyces cerevisiae: Then and now.</title>
        <authorList>
            <person name="Engel S.R."/>
            <person name="Dietrich F.S."/>
            <person name="Fisk D.G."/>
            <person name="Binkley G."/>
            <person name="Balakrishnan R."/>
            <person name="Costanzo M.C."/>
            <person name="Dwight S.S."/>
            <person name="Hitz B.C."/>
            <person name="Karra K."/>
            <person name="Nash R.S."/>
            <person name="Weng S."/>
            <person name="Wong E.D."/>
            <person name="Lloyd P."/>
            <person name="Skrzypek M.S."/>
            <person name="Miyasato S.R."/>
            <person name="Simison M."/>
            <person name="Cherry J.M."/>
        </authorList>
    </citation>
    <scope>GENOME REANNOTATION</scope>
    <source>
        <strain>ATCC 204508 / S288c</strain>
    </source>
</reference>
<reference key="4">
    <citation type="journal article" date="1993" name="DNA Seq.">
        <title>Identification of a Saccharomyces cerevisiae gene closely related to FAS3 (acetyl-CoA carboxylase).</title>
        <authorList>
            <person name="Kearsey S.E."/>
        </authorList>
    </citation>
    <scope>NUCLEOTIDE SEQUENCE [GENOMIC DNA] OF 125-949</scope>
</reference>
<reference key="5">
    <citation type="journal article" date="2003" name="Nature">
        <title>Global analysis of protein localization in budding yeast.</title>
        <authorList>
            <person name="Huh W.-K."/>
            <person name="Falvo J.V."/>
            <person name="Gerke L.C."/>
            <person name="Carroll A.S."/>
            <person name="Howson R.W."/>
            <person name="Weissman J.S."/>
            <person name="O'Shea E.K."/>
        </authorList>
    </citation>
    <scope>SUBCELLULAR LOCATION [LARGE SCALE ANALYSIS]</scope>
</reference>
<reference key="6">
    <citation type="journal article" date="2003" name="Nature">
        <title>Global analysis of protein expression in yeast.</title>
        <authorList>
            <person name="Ghaemmaghami S."/>
            <person name="Huh W.-K."/>
            <person name="Bower K."/>
            <person name="Howson R.W."/>
            <person name="Belle A."/>
            <person name="Dephoure N."/>
            <person name="O'Shea E.K."/>
            <person name="Weissman J.S."/>
        </authorList>
    </citation>
    <scope>LEVEL OF PROTEIN EXPRESSION [LARGE SCALE ANALYSIS]</scope>
</reference>
<reference key="7">
    <citation type="journal article" date="2003" name="Proc. Natl. Acad. Sci. U.S.A.">
        <title>The proteome of Saccharomyces cerevisiae mitochondria.</title>
        <authorList>
            <person name="Sickmann A."/>
            <person name="Reinders J."/>
            <person name="Wagner Y."/>
            <person name="Joppich C."/>
            <person name="Zahedi R.P."/>
            <person name="Meyer H.E."/>
            <person name="Schoenfisch B."/>
            <person name="Perschil I."/>
            <person name="Chacinska A."/>
            <person name="Guiard B."/>
            <person name="Rehling P."/>
            <person name="Pfanner N."/>
            <person name="Meisinger C."/>
        </authorList>
    </citation>
    <scope>SUBCELLULAR LOCATION [LARGE SCALE ANALYSIS]</scope>
    <source>
        <strain>ATCC 76625 / YPH499</strain>
    </source>
</reference>
<reference key="8">
    <citation type="journal article" date="2004" name="J. Biol. Chem.">
        <title>HFA1 encoding an organelle-specific acetyl-CoA carboxylase controls mitochondrial fatty acid synthesis in Saccharomyces cerevisiae.</title>
        <authorList>
            <person name="Hoja U."/>
            <person name="Marthol S."/>
            <person name="Hofmann J."/>
            <person name="Stegner S."/>
            <person name="Schulz R."/>
            <person name="Meier S."/>
            <person name="Greiner E."/>
            <person name="Schweizer E."/>
        </authorList>
    </citation>
    <scope>FUNCTION</scope>
    <scope>CATALYTIC ACTIVITY</scope>
    <scope>SUBCELLULAR LOCATION</scope>
</reference>
<keyword id="KW-0067">ATP-binding</keyword>
<keyword id="KW-0092">Biotin</keyword>
<keyword id="KW-0275">Fatty acid biosynthesis</keyword>
<keyword id="KW-0276">Fatty acid metabolism</keyword>
<keyword id="KW-0436">Ligase</keyword>
<keyword id="KW-0444">Lipid biosynthesis</keyword>
<keyword id="KW-0443">Lipid metabolism</keyword>
<keyword id="KW-0496">Mitochondrion</keyword>
<keyword id="KW-0511">Multifunctional enzyme</keyword>
<keyword id="KW-0547">Nucleotide-binding</keyword>
<keyword id="KW-1185">Reference proteome</keyword>
<keyword id="KW-0809">Transit peptide</keyword>
<dbReference type="EC" id="6.4.1.2" evidence="13"/>
<dbReference type="EC" id="6.3.4.14" evidence="2"/>
<dbReference type="EMBL" id="D78165">
    <property type="protein sequence ID" value="BAA24410.1"/>
    <property type="molecule type" value="Genomic_DNA"/>
</dbReference>
<dbReference type="EMBL" id="Z49809">
    <property type="protein sequence ID" value="CAA89922.1"/>
    <property type="molecule type" value="Genomic_DNA"/>
</dbReference>
<dbReference type="EMBL" id="Z48755">
    <property type="protein sequence ID" value="CAA88647.1"/>
    <property type="molecule type" value="Genomic_DNA"/>
</dbReference>
<dbReference type="EMBL" id="Z22558">
    <property type="protein sequence ID" value="CAA80280.1"/>
    <property type="molecule type" value="Genomic_DNA"/>
</dbReference>
<dbReference type="EMBL" id="BK006946">
    <property type="protein sequence ID" value="DAA10106.1"/>
    <property type="status" value="ALT_INIT"/>
    <property type="molecule type" value="Genomic_DNA"/>
</dbReference>
<dbReference type="PIR" id="S55089">
    <property type="entry name" value="S55089"/>
</dbReference>
<dbReference type="RefSeq" id="NP_013934.1">
    <property type="nucleotide sequence ID" value="NM_001182714.1"/>
</dbReference>
<dbReference type="SMR" id="P32874"/>
<dbReference type="BioGRID" id="35385">
    <property type="interactions" value="264"/>
</dbReference>
<dbReference type="DIP" id="DIP-2568N"/>
<dbReference type="FunCoup" id="P32874">
    <property type="interactions" value="534"/>
</dbReference>
<dbReference type="IntAct" id="P32874">
    <property type="interactions" value="3"/>
</dbReference>
<dbReference type="MINT" id="P32874"/>
<dbReference type="STRING" id="4932.YMR207C"/>
<dbReference type="GlyGen" id="P32874">
    <property type="glycosylation" value="3 sites, 1 O-linked glycan (2 sites)"/>
</dbReference>
<dbReference type="iPTMnet" id="P32874"/>
<dbReference type="PaxDb" id="4932-YMR207C"/>
<dbReference type="PeptideAtlas" id="P32874"/>
<dbReference type="GeneID" id="855247"/>
<dbReference type="KEGG" id="sce:YMR207C"/>
<dbReference type="AGR" id="SGD:S000004820"/>
<dbReference type="SGD" id="S000004820">
    <property type="gene designation" value="HFA1"/>
</dbReference>
<dbReference type="eggNOG" id="KOG0368">
    <property type="taxonomic scope" value="Eukaryota"/>
</dbReference>
<dbReference type="HOGENOM" id="CLU_000395_5_2_1"/>
<dbReference type="InParanoid" id="P32874"/>
<dbReference type="OrthoDB" id="14612at2759"/>
<dbReference type="BioCyc" id="MetaCyc:YMR207C-MONOMER"/>
<dbReference type="BioCyc" id="YEAST:YMR207C-MONOMER"/>
<dbReference type="Reactome" id="R-SCE-196780">
    <property type="pathway name" value="Biotin transport and metabolism"/>
</dbReference>
<dbReference type="Reactome" id="R-SCE-200425">
    <property type="pathway name" value="Carnitine shuttle"/>
</dbReference>
<dbReference type="UniPathway" id="UPA00655">
    <property type="reaction ID" value="UER00711"/>
</dbReference>
<dbReference type="BioGRID-ORCS" id="855247">
    <property type="hits" value="1 hit in 10 CRISPR screens"/>
</dbReference>
<dbReference type="PRO" id="PR:P32874"/>
<dbReference type="Proteomes" id="UP000002311">
    <property type="component" value="Chromosome XIII"/>
</dbReference>
<dbReference type="RNAct" id="P32874">
    <property type="molecule type" value="protein"/>
</dbReference>
<dbReference type="GO" id="GO:0005737">
    <property type="term" value="C:cytoplasm"/>
    <property type="evidence" value="ECO:0007005"/>
    <property type="project" value="SGD"/>
</dbReference>
<dbReference type="GO" id="GO:0005739">
    <property type="term" value="C:mitochondrion"/>
    <property type="evidence" value="ECO:0000314"/>
    <property type="project" value="SGD"/>
</dbReference>
<dbReference type="GO" id="GO:0003989">
    <property type="term" value="F:acetyl-CoA carboxylase activity"/>
    <property type="evidence" value="ECO:0000316"/>
    <property type="project" value="SGD"/>
</dbReference>
<dbReference type="GO" id="GO:0005524">
    <property type="term" value="F:ATP binding"/>
    <property type="evidence" value="ECO:0007669"/>
    <property type="project" value="UniProtKB-KW"/>
</dbReference>
<dbReference type="GO" id="GO:0004075">
    <property type="term" value="F:biotin carboxylase activity"/>
    <property type="evidence" value="ECO:0007669"/>
    <property type="project" value="UniProtKB-EC"/>
</dbReference>
<dbReference type="GO" id="GO:0046872">
    <property type="term" value="F:metal ion binding"/>
    <property type="evidence" value="ECO:0007669"/>
    <property type="project" value="InterPro"/>
</dbReference>
<dbReference type="GO" id="GO:0006633">
    <property type="term" value="P:fatty acid biosynthetic process"/>
    <property type="evidence" value="ECO:0000318"/>
    <property type="project" value="GO_Central"/>
</dbReference>
<dbReference type="GO" id="GO:0042759">
    <property type="term" value="P:long-chain fatty acid biosynthetic process"/>
    <property type="evidence" value="ECO:0000316"/>
    <property type="project" value="SGD"/>
</dbReference>
<dbReference type="GO" id="GO:2001295">
    <property type="term" value="P:malonyl-CoA biosynthetic process"/>
    <property type="evidence" value="ECO:0007669"/>
    <property type="project" value="UniProtKB-UniPathway"/>
</dbReference>
<dbReference type="CDD" id="cd06850">
    <property type="entry name" value="biotinyl_domain"/>
    <property type="match status" value="1"/>
</dbReference>
<dbReference type="FunFam" id="2.40.460.10:FF:000001">
    <property type="entry name" value="Acetyl-CoA carboxylase 1"/>
    <property type="match status" value="1"/>
</dbReference>
<dbReference type="FunFam" id="2.40.50.100:FF:000005">
    <property type="entry name" value="Acetyl-CoA carboxylase 1"/>
    <property type="match status" value="1"/>
</dbReference>
<dbReference type="FunFam" id="3.90.1770.10:FF:000001">
    <property type="entry name" value="acetyl-CoA carboxylase 1"/>
    <property type="match status" value="1"/>
</dbReference>
<dbReference type="FunFam" id="3.30.1490.20:FF:000003">
    <property type="entry name" value="acetyl-CoA carboxylase isoform X1"/>
    <property type="match status" value="1"/>
</dbReference>
<dbReference type="FunFam" id="3.40.50.20:FF:000005">
    <property type="entry name" value="acetyl-CoA carboxylase isoform X2"/>
    <property type="match status" value="1"/>
</dbReference>
<dbReference type="FunFam" id="3.90.226.10:FF:000010">
    <property type="entry name" value="acetyl-CoA carboxylase isoform X2"/>
    <property type="match status" value="1"/>
</dbReference>
<dbReference type="Gene3D" id="2.40.50.100">
    <property type="match status" value="1"/>
</dbReference>
<dbReference type="Gene3D" id="3.40.50.20">
    <property type="match status" value="1"/>
</dbReference>
<dbReference type="Gene3D" id="3.90.226.10">
    <property type="entry name" value="2-enoyl-CoA Hydratase, Chain A, domain 1"/>
    <property type="match status" value="2"/>
</dbReference>
<dbReference type="Gene3D" id="3.30.1490.20">
    <property type="entry name" value="ATP-grasp fold, A domain"/>
    <property type="match status" value="1"/>
</dbReference>
<dbReference type="Gene3D" id="3.30.470.20">
    <property type="entry name" value="ATP-grasp fold, B domain"/>
    <property type="match status" value="1"/>
</dbReference>
<dbReference type="Gene3D" id="2.40.460.10">
    <property type="entry name" value="Biotin dependent carboxylase carboxyltransferase"/>
    <property type="match status" value="1"/>
</dbReference>
<dbReference type="Gene3D" id="3.90.1770.10">
    <property type="entry name" value="PreATP-grasp domain"/>
    <property type="match status" value="1"/>
</dbReference>
<dbReference type="InterPro" id="IPR049076">
    <property type="entry name" value="ACCA"/>
</dbReference>
<dbReference type="InterPro" id="IPR049074">
    <property type="entry name" value="ACCA_BT"/>
</dbReference>
<dbReference type="InterPro" id="IPR034733">
    <property type="entry name" value="AcCoA_carboxyl_beta"/>
</dbReference>
<dbReference type="InterPro" id="IPR013537">
    <property type="entry name" value="AcCoA_COase_cen"/>
</dbReference>
<dbReference type="InterPro" id="IPR011761">
    <property type="entry name" value="ATP-grasp"/>
</dbReference>
<dbReference type="InterPro" id="IPR013815">
    <property type="entry name" value="ATP_grasp_subdomain_1"/>
</dbReference>
<dbReference type="InterPro" id="IPR005481">
    <property type="entry name" value="BC-like_N"/>
</dbReference>
<dbReference type="InterPro" id="IPR001882">
    <property type="entry name" value="Biotin_BS"/>
</dbReference>
<dbReference type="InterPro" id="IPR011764">
    <property type="entry name" value="Biotin_carboxylation_dom"/>
</dbReference>
<dbReference type="InterPro" id="IPR005482">
    <property type="entry name" value="Biotin_COase_C"/>
</dbReference>
<dbReference type="InterPro" id="IPR000089">
    <property type="entry name" value="Biotin_lipoyl"/>
</dbReference>
<dbReference type="InterPro" id="IPR005479">
    <property type="entry name" value="CbamoylP_synth_lsu-like_ATP-bd"/>
</dbReference>
<dbReference type="InterPro" id="IPR029045">
    <property type="entry name" value="ClpP/crotonase-like_dom_sf"/>
</dbReference>
<dbReference type="InterPro" id="IPR011763">
    <property type="entry name" value="COA_CT_C"/>
</dbReference>
<dbReference type="InterPro" id="IPR011762">
    <property type="entry name" value="COA_CT_N"/>
</dbReference>
<dbReference type="InterPro" id="IPR016185">
    <property type="entry name" value="PreATP-grasp_dom_sf"/>
</dbReference>
<dbReference type="InterPro" id="IPR011054">
    <property type="entry name" value="Rudment_hybrid_motif"/>
</dbReference>
<dbReference type="InterPro" id="IPR011053">
    <property type="entry name" value="Single_hybrid_motif"/>
</dbReference>
<dbReference type="PANTHER" id="PTHR45728:SF3">
    <property type="entry name" value="ACETYL-COA CARBOXYLASE"/>
    <property type="match status" value="1"/>
</dbReference>
<dbReference type="PANTHER" id="PTHR45728">
    <property type="entry name" value="ACETYL-COA CARBOXYLASE, ISOFORM A"/>
    <property type="match status" value="1"/>
</dbReference>
<dbReference type="Pfam" id="PF08326">
    <property type="entry name" value="ACC_central"/>
    <property type="match status" value="1"/>
</dbReference>
<dbReference type="Pfam" id="PF21385">
    <property type="entry name" value="ACCA_BT"/>
    <property type="match status" value="1"/>
</dbReference>
<dbReference type="Pfam" id="PF02785">
    <property type="entry name" value="Biotin_carb_C"/>
    <property type="match status" value="1"/>
</dbReference>
<dbReference type="Pfam" id="PF00289">
    <property type="entry name" value="Biotin_carb_N"/>
    <property type="match status" value="1"/>
</dbReference>
<dbReference type="Pfam" id="PF00364">
    <property type="entry name" value="Biotin_lipoyl"/>
    <property type="match status" value="1"/>
</dbReference>
<dbReference type="Pfam" id="PF01039">
    <property type="entry name" value="Carboxyl_trans"/>
    <property type="match status" value="1"/>
</dbReference>
<dbReference type="Pfam" id="PF02786">
    <property type="entry name" value="CPSase_L_D2"/>
    <property type="match status" value="1"/>
</dbReference>
<dbReference type="SMART" id="SM00878">
    <property type="entry name" value="Biotin_carb_C"/>
    <property type="match status" value="1"/>
</dbReference>
<dbReference type="SUPFAM" id="SSF52096">
    <property type="entry name" value="ClpP/crotonase"/>
    <property type="match status" value="2"/>
</dbReference>
<dbReference type="SUPFAM" id="SSF56059">
    <property type="entry name" value="Glutathione synthetase ATP-binding domain-like"/>
    <property type="match status" value="1"/>
</dbReference>
<dbReference type="SUPFAM" id="SSF52440">
    <property type="entry name" value="PreATP-grasp domain"/>
    <property type="match status" value="1"/>
</dbReference>
<dbReference type="SUPFAM" id="SSF51246">
    <property type="entry name" value="Rudiment single hybrid motif"/>
    <property type="match status" value="1"/>
</dbReference>
<dbReference type="SUPFAM" id="SSF51230">
    <property type="entry name" value="Single hybrid motif"/>
    <property type="match status" value="1"/>
</dbReference>
<dbReference type="PROSITE" id="PS50975">
    <property type="entry name" value="ATP_GRASP"/>
    <property type="match status" value="1"/>
</dbReference>
<dbReference type="PROSITE" id="PS50979">
    <property type="entry name" value="BC"/>
    <property type="match status" value="1"/>
</dbReference>
<dbReference type="PROSITE" id="PS00188">
    <property type="entry name" value="BIOTIN"/>
    <property type="match status" value="1"/>
</dbReference>
<dbReference type="PROSITE" id="PS50968">
    <property type="entry name" value="BIOTINYL_LIPOYL"/>
    <property type="match status" value="1"/>
</dbReference>
<dbReference type="PROSITE" id="PS50989">
    <property type="entry name" value="COA_CT_CTER"/>
    <property type="match status" value="1"/>
</dbReference>
<dbReference type="PROSITE" id="PS50980">
    <property type="entry name" value="COA_CT_NTER"/>
    <property type="match status" value="1"/>
</dbReference>
<dbReference type="PROSITE" id="PS00866">
    <property type="entry name" value="CPSASE_1"/>
    <property type="match status" value="1"/>
</dbReference>
<dbReference type="PROSITE" id="PS00867">
    <property type="entry name" value="CPSASE_2"/>
    <property type="match status" value="1"/>
</dbReference>
<name>HFA1_YEAST</name>
<gene>
    <name type="primary">HFA1</name>
    <name type="ordered locus">YMR207C</name>
    <name type="ORF">YM8261.01C</name>
    <name type="ORF">YM8325.08C</name>
</gene>
<proteinExistence type="evidence at protein level"/>
<feature type="transit peptide" description="Mitochondrion" evidence="4">
    <location>
        <begin position="1"/>
        <end position="104"/>
    </location>
</feature>
<feature type="chain" id="PRO_0000146771" description="Acetyl-CoA carboxylase, mitochondrial">
    <location>
        <begin position="105"/>
        <end position="2273"/>
    </location>
</feature>
<feature type="domain" description="Biotin carboxylation">
    <location>
        <begin position="134"/>
        <end position="635"/>
    </location>
</feature>
<feature type="domain" description="ATP-grasp" evidence="5">
    <location>
        <begin position="292"/>
        <end position="484"/>
    </location>
</feature>
<feature type="domain" description="Biotinyl-binding" evidence="6">
    <location>
        <begin position="763"/>
        <end position="837"/>
    </location>
</feature>
<feature type="domain" description="CoA carboxyltransferase N-terminal" evidence="7">
    <location>
        <begin position="1532"/>
        <end position="1867"/>
    </location>
</feature>
<feature type="domain" description="CoA carboxyltransferase C-terminal" evidence="8">
    <location>
        <begin position="1871"/>
        <end position="2187"/>
    </location>
</feature>
<feature type="region of interest" description="Carboxyltransferase" evidence="9">
    <location>
        <begin position="1532"/>
        <end position="2187"/>
    </location>
</feature>
<feature type="active site" evidence="3">
    <location>
        <position position="459"/>
    </location>
</feature>
<feature type="binding site" evidence="5">
    <location>
        <begin position="332"/>
        <end position="337"/>
    </location>
    <ligand>
        <name>ATP</name>
        <dbReference type="ChEBI" id="CHEBI:30616"/>
    </ligand>
</feature>
<feature type="binding site" evidence="3">
    <location>
        <position position="1776"/>
    </location>
    <ligand>
        <name>CoA</name>
        <dbReference type="ChEBI" id="CHEBI:57287"/>
    </ligand>
</feature>
<feature type="binding site" evidence="3">
    <location>
        <position position="2080"/>
    </location>
    <ligand>
        <name>CoA</name>
        <dbReference type="ChEBI" id="CHEBI:57287"/>
    </ligand>
</feature>
<feature type="binding site" evidence="3">
    <location>
        <position position="2082"/>
    </location>
    <ligand>
        <name>CoA</name>
        <dbReference type="ChEBI" id="CHEBI:57287"/>
    </ligand>
</feature>
<feature type="modified residue" description="N6-biotinyllysine" evidence="1 6">
    <location>
        <position position="804"/>
    </location>
</feature>
<feature type="sequence conflict" description="In Ref. 4; CAA80280." evidence="15" ref="4">
    <original>F</original>
    <variation>L</variation>
    <location>
        <position position="661"/>
    </location>
</feature>
<feature type="sequence conflict" description="In Ref. 1; BAA24410." evidence="15" ref="1">
    <original>K</original>
    <variation>E</variation>
    <location>
        <position position="1027"/>
    </location>
</feature>
<accession>P32874</accession>
<accession>D6W032</accession>
<accession>O42823</accession>
<sequence length="2273" mass="259163">KGKTITHGQSWGARRIHSHFYITIFTITCIRIGQYKLALYLDPYRFYNITGSQIVRLKGQRPEYRKRIFAHSYRHSSRIGLNFPSRRRYSNYVDRGNIHKHTRLPPQFIGLNTVESAQPSILRDFVDLRGGHTVISKILIANNGIAAVKEMRSIRKWAYETFNDEKIIQFVVMATPDDLHANSEYIRMADQYVQVPGGTNNNNYANIDLILDVAEQTDVDAVWAGWGHASENPCLPELLASSQRKILFIGPPGRAMRSLGDKISSTIVAQSAKIPCIPWSGSHIDTIHIDNKTNFVSVPDDVYVRGCCSSPEDALEKAKLIGFPVMIKASEGGGGKGIRRVDNEDDFIALYRQAVNETPGSPMFVMKVVTDARHLEVQLLADQYGTNITLFGRDCSIQRRHQKIIEEAPVTITKPETFQRMERAAIRLGELVGYVSAGTVEYLYSPKDDKFYFLELNPRLQVEHPTTEMISGVNLPATQLQIAMGIPMHMISDIRKLYGLDPTGTSYIDFKNLKRPSPKGHCISCRITSEDPNEGFKPSTGKIHELNFRSSSNVWGYFSVGNNGAIHSFSDSQFGHIFAVGNDRQDAKQNMVLALKDFSIRGEFKTPIEYLIELLETRDFESNNISTGWLDDLILKNLSSDSKLDPTLAIICGAAMKAYVFTEKVRNKYLELLRRGQVPPKDFLKTKFPVDFIFDNNRYLFNVAQSSEEQFILSINKSQCEVNVQKLSSDCLLISVDGKCHTVYWKDDIRGTRLSIDSNTIFLEAELNPTQVISPTPGKLVKYLVRSGDHVFAGQQYAEIEIMKMQMPLVAKSDGVIELLRQPGSIIEAGDVIAKLTLDSPSKANESSLYRGELPVLGPPLIEGSRPNHKLRVLINRLENILNGYHENSGIETTLKELIKILRDGRLPYSEWDSQISTVRNRLPRQLNEGLGNLVKKSVSFPAKELHKLMKRYLEENTNDHVVYVALQPLLKISERYSEGLANHECEIFLKLIKKYYAVEKIFENHDIHEERNLLNLRRKDLTNLKKILCISLSHANVVAKNKLVTAILHEYEPLCQDSSKMSLKFRAVIHDLASLESKWAKEVAVKARSVLLRGIFPPIKKRKEHIKTLLQLHIKDTGAENIHSRNIYSCMRDFGNLIHSNLIQLQDLFFFFGHQDTALSSIASEIYARYAYGNYQLKSIKIHKGAPDLLMSWQFSSLRNYLVNSDGESDEFTKLSKPPSTSGKSSANSFGLLVNMRALESLEKTLDEVYEQIHIPEERLSSGENSLIVNILSPIRYRSENDLIKTLKIKLHENERGLSKLKVNRITFAFIAANAPAVKFYSFDGTTYDEISQIRNMDPSYEAPLELGKMSNYKIRSLPTYDSSIRIFEGISKFTPLDKRFFVRKIINSFMYNDQKTTEENLKAEINAQVVYMLEHLGAVDISNSDLNHIFLSFNTVLNIPVHRLEEIVSTILKTHETRLFQERITDVEICISVECLETKKPAPLRLLISNKSGYVVKIETYYEKIGKNGNLILEPCSEQSHYSQKSLSLPYSVKDWLQPKRYKAQFMGTTYVYDFPGLFHQAAIQQWKRYFPKHKLNDSFFSWVELIEQNGNLIKVNREPGLNNIGMVAFEIMVQTPEYPEGRNMIVISNDITYNIGSFGPREDLFFDRVTNYARERGIPRIYLAANSGAKLGIAEELIPLFRVAWNDPSDPTKGFQYLYLAPKDMQLLKDSGKGNSVVVEHKMVYGEERYIIKAIVGFEEGLGVECLQGSGLIAGATSKAYRDIFTITAVTCRSVGIGSYLVRLGQRTIQVEDKPIILTGASAINKVLGTDIYTSNLQIGGTQIMYKNGIAHLTASNDMKAIEKIMTWLSYVPAKRDMSPPLLETMDRWDRDVDFKPAKQVPYEARWLIEGKWDSNNNFQSGLFDKDSFFETLSGWAKGVIVGRARLGGIPVGVIAVETKTIEEIIPADPANLDSSEFSVKEAGQVWYPNSAFKTAQTINDFNYGEQLPLIILANWRGFSGGQRDMYNEVLKYGSFIVDALVDYKQPILIYIPPFGELRGGSWVVIDPTINPEQMEMYADVESRGGVLEPDGVVSIKYRKEKMIETMIRLDSTYGHLRRTLTEKKLSLEKQNDLTKRLKIRERQLIPIYNQISIQFADLHDRSTRMLVKGVIRNELEWKKSRRFLYWRLRRRLNEGQVIKRLQKKTCDNKTKMKYDDLLKIVQSWYNDLDVNDDRAVVEFIERNSKKIDKNIEEFEISLLIDELKKKFEDRRGNIVLEELTRLVDSKRKR</sequence>
<protein>
    <recommendedName>
        <fullName evidence="14">Acetyl-CoA carboxylase, mitochondrial</fullName>
        <shortName evidence="14">ACC</shortName>
        <ecNumber evidence="13">6.4.1.2</ecNumber>
    </recommendedName>
    <domain>
        <recommendedName>
            <fullName evidence="2">Biotin carboxylase</fullName>
            <ecNumber evidence="2">6.3.4.14</ecNumber>
        </recommendedName>
    </domain>
</protein>